<name>HUTI_BACC4</name>
<feature type="chain" id="PRO_1000121531" description="Imidazolonepropionase">
    <location>
        <begin position="1"/>
        <end position="423"/>
    </location>
</feature>
<feature type="binding site" evidence="1">
    <location>
        <position position="78"/>
    </location>
    <ligand>
        <name>Fe(3+)</name>
        <dbReference type="ChEBI" id="CHEBI:29034"/>
    </ligand>
</feature>
<feature type="binding site" evidence="1">
    <location>
        <position position="78"/>
    </location>
    <ligand>
        <name>Zn(2+)</name>
        <dbReference type="ChEBI" id="CHEBI:29105"/>
    </ligand>
</feature>
<feature type="binding site" evidence="1">
    <location>
        <position position="80"/>
    </location>
    <ligand>
        <name>Fe(3+)</name>
        <dbReference type="ChEBI" id="CHEBI:29034"/>
    </ligand>
</feature>
<feature type="binding site" evidence="1">
    <location>
        <position position="80"/>
    </location>
    <ligand>
        <name>Zn(2+)</name>
        <dbReference type="ChEBI" id="CHEBI:29105"/>
    </ligand>
</feature>
<feature type="binding site" evidence="1">
    <location>
        <position position="87"/>
    </location>
    <ligand>
        <name>4-imidazolone-5-propanoate</name>
        <dbReference type="ChEBI" id="CHEBI:77893"/>
    </ligand>
</feature>
<feature type="binding site" evidence="1">
    <location>
        <position position="150"/>
    </location>
    <ligand>
        <name>4-imidazolone-5-propanoate</name>
        <dbReference type="ChEBI" id="CHEBI:77893"/>
    </ligand>
</feature>
<feature type="binding site" evidence="1">
    <location>
        <position position="150"/>
    </location>
    <ligand>
        <name>N-formimidoyl-L-glutamate</name>
        <dbReference type="ChEBI" id="CHEBI:58928"/>
    </ligand>
</feature>
<feature type="binding site" evidence="1">
    <location>
        <position position="183"/>
    </location>
    <ligand>
        <name>4-imidazolone-5-propanoate</name>
        <dbReference type="ChEBI" id="CHEBI:77893"/>
    </ligand>
</feature>
<feature type="binding site" evidence="1">
    <location>
        <position position="247"/>
    </location>
    <ligand>
        <name>Fe(3+)</name>
        <dbReference type="ChEBI" id="CHEBI:29034"/>
    </ligand>
</feature>
<feature type="binding site" evidence="1">
    <location>
        <position position="247"/>
    </location>
    <ligand>
        <name>Zn(2+)</name>
        <dbReference type="ChEBI" id="CHEBI:29105"/>
    </ligand>
</feature>
<feature type="binding site" evidence="1">
    <location>
        <position position="250"/>
    </location>
    <ligand>
        <name>4-imidazolone-5-propanoate</name>
        <dbReference type="ChEBI" id="CHEBI:77893"/>
    </ligand>
</feature>
<feature type="binding site" evidence="1">
    <location>
        <position position="322"/>
    </location>
    <ligand>
        <name>Fe(3+)</name>
        <dbReference type="ChEBI" id="CHEBI:29034"/>
    </ligand>
</feature>
<feature type="binding site" evidence="1">
    <location>
        <position position="322"/>
    </location>
    <ligand>
        <name>Zn(2+)</name>
        <dbReference type="ChEBI" id="CHEBI:29105"/>
    </ligand>
</feature>
<feature type="binding site" evidence="1">
    <location>
        <position position="324"/>
    </location>
    <ligand>
        <name>N-formimidoyl-L-glutamate</name>
        <dbReference type="ChEBI" id="CHEBI:58928"/>
    </ligand>
</feature>
<feature type="binding site" evidence="1">
    <location>
        <position position="326"/>
    </location>
    <ligand>
        <name>N-formimidoyl-L-glutamate</name>
        <dbReference type="ChEBI" id="CHEBI:58928"/>
    </ligand>
</feature>
<feature type="binding site" evidence="1">
    <location>
        <position position="327"/>
    </location>
    <ligand>
        <name>4-imidazolone-5-propanoate</name>
        <dbReference type="ChEBI" id="CHEBI:77893"/>
    </ligand>
</feature>
<sequence length="423" mass="46169">MLDTLLINIGQLLTMDQEDGLLRREAMNTLPVIENGAVGIENGVITFVGTAEEAKGLQAREVIDCGGKMVSPGLVDPHTHLVFGGSRENEIALKLQGVPYLEILEQGGGILATVNATKQASKEELVQKAKFHLDRMLSFGVTTVEAKSGYGLDDETEWKQLEATAQLQKEHPVDIVSTFLGAHAVPKEYKGRSKEFLQWMLDLLPEMKEKQLAEFVDIFCETGVFSVEESKEFLLKAKELGFDVKIHADEIDPLGGAEAAAEIGAASADHLVGASDKGIEMLANSNTVATLLPGTTFYLNKESFARGRKMIDEGVAVALATDFNPGSCPTENIQLIMSIAMLKLKMTPEEVWNAVTVNSSYAINRGDVAGKIRVGRKADLVLWDAYNYAYVPYHYGVSHVNTVWKNGNIAYTRGEQSWSTATI</sequence>
<dbReference type="EC" id="3.5.2.7" evidence="1"/>
<dbReference type="EMBL" id="CP001176">
    <property type="protein sequence ID" value="ACK64091.1"/>
    <property type="molecule type" value="Genomic_DNA"/>
</dbReference>
<dbReference type="RefSeq" id="WP_000887538.1">
    <property type="nucleotide sequence ID" value="NC_011725.1"/>
</dbReference>
<dbReference type="SMR" id="B7HCC8"/>
<dbReference type="KEGG" id="bcb:BCB4264_A3758"/>
<dbReference type="HOGENOM" id="CLU_041647_0_1_9"/>
<dbReference type="UniPathway" id="UPA00379">
    <property type="reaction ID" value="UER00551"/>
</dbReference>
<dbReference type="Proteomes" id="UP000007096">
    <property type="component" value="Chromosome"/>
</dbReference>
<dbReference type="GO" id="GO:0005737">
    <property type="term" value="C:cytoplasm"/>
    <property type="evidence" value="ECO:0007669"/>
    <property type="project" value="UniProtKB-SubCell"/>
</dbReference>
<dbReference type="GO" id="GO:0050480">
    <property type="term" value="F:imidazolonepropionase activity"/>
    <property type="evidence" value="ECO:0007669"/>
    <property type="project" value="UniProtKB-UniRule"/>
</dbReference>
<dbReference type="GO" id="GO:0005506">
    <property type="term" value="F:iron ion binding"/>
    <property type="evidence" value="ECO:0007669"/>
    <property type="project" value="UniProtKB-UniRule"/>
</dbReference>
<dbReference type="GO" id="GO:0008270">
    <property type="term" value="F:zinc ion binding"/>
    <property type="evidence" value="ECO:0007669"/>
    <property type="project" value="UniProtKB-UniRule"/>
</dbReference>
<dbReference type="GO" id="GO:0019556">
    <property type="term" value="P:L-histidine catabolic process to glutamate and formamide"/>
    <property type="evidence" value="ECO:0007669"/>
    <property type="project" value="UniProtKB-UniPathway"/>
</dbReference>
<dbReference type="GO" id="GO:0019557">
    <property type="term" value="P:L-histidine catabolic process to glutamate and formate"/>
    <property type="evidence" value="ECO:0007669"/>
    <property type="project" value="UniProtKB-UniPathway"/>
</dbReference>
<dbReference type="CDD" id="cd01296">
    <property type="entry name" value="Imidazolone-5PH"/>
    <property type="match status" value="1"/>
</dbReference>
<dbReference type="FunFam" id="3.20.20.140:FF:000007">
    <property type="entry name" value="Imidazolonepropionase"/>
    <property type="match status" value="1"/>
</dbReference>
<dbReference type="Gene3D" id="3.20.20.140">
    <property type="entry name" value="Metal-dependent hydrolases"/>
    <property type="match status" value="1"/>
</dbReference>
<dbReference type="Gene3D" id="2.30.40.10">
    <property type="entry name" value="Urease, subunit C, domain 1"/>
    <property type="match status" value="1"/>
</dbReference>
<dbReference type="HAMAP" id="MF_00372">
    <property type="entry name" value="HutI"/>
    <property type="match status" value="1"/>
</dbReference>
<dbReference type="InterPro" id="IPR006680">
    <property type="entry name" value="Amidohydro-rel"/>
</dbReference>
<dbReference type="InterPro" id="IPR005920">
    <property type="entry name" value="HutI"/>
</dbReference>
<dbReference type="InterPro" id="IPR011059">
    <property type="entry name" value="Metal-dep_hydrolase_composite"/>
</dbReference>
<dbReference type="InterPro" id="IPR032466">
    <property type="entry name" value="Metal_Hydrolase"/>
</dbReference>
<dbReference type="NCBIfam" id="TIGR01224">
    <property type="entry name" value="hutI"/>
    <property type="match status" value="1"/>
</dbReference>
<dbReference type="PANTHER" id="PTHR42752">
    <property type="entry name" value="IMIDAZOLONEPROPIONASE"/>
    <property type="match status" value="1"/>
</dbReference>
<dbReference type="PANTHER" id="PTHR42752:SF1">
    <property type="entry name" value="IMIDAZOLONEPROPIONASE-RELATED"/>
    <property type="match status" value="1"/>
</dbReference>
<dbReference type="Pfam" id="PF01979">
    <property type="entry name" value="Amidohydro_1"/>
    <property type="match status" value="1"/>
</dbReference>
<dbReference type="SUPFAM" id="SSF51338">
    <property type="entry name" value="Composite domain of metallo-dependent hydrolases"/>
    <property type="match status" value="1"/>
</dbReference>
<dbReference type="SUPFAM" id="SSF51556">
    <property type="entry name" value="Metallo-dependent hydrolases"/>
    <property type="match status" value="1"/>
</dbReference>
<accession>B7HCC8</accession>
<keyword id="KW-0963">Cytoplasm</keyword>
<keyword id="KW-0369">Histidine metabolism</keyword>
<keyword id="KW-0378">Hydrolase</keyword>
<keyword id="KW-0408">Iron</keyword>
<keyword id="KW-0479">Metal-binding</keyword>
<keyword id="KW-0862">Zinc</keyword>
<organism>
    <name type="scientific">Bacillus cereus (strain B4264)</name>
    <dbReference type="NCBI Taxonomy" id="405532"/>
    <lineage>
        <taxon>Bacteria</taxon>
        <taxon>Bacillati</taxon>
        <taxon>Bacillota</taxon>
        <taxon>Bacilli</taxon>
        <taxon>Bacillales</taxon>
        <taxon>Bacillaceae</taxon>
        <taxon>Bacillus</taxon>
        <taxon>Bacillus cereus group</taxon>
    </lineage>
</organism>
<protein>
    <recommendedName>
        <fullName evidence="1">Imidazolonepropionase</fullName>
        <ecNumber evidence="1">3.5.2.7</ecNumber>
    </recommendedName>
    <alternativeName>
        <fullName evidence="1">Imidazolone-5-propionate hydrolase</fullName>
    </alternativeName>
</protein>
<comment type="function">
    <text evidence="1">Catalyzes the hydrolytic cleavage of the carbon-nitrogen bond in imidazolone-5-propanoate to yield N-formimidoyl-L-glutamate. It is the third step in the universal histidine degradation pathway.</text>
</comment>
<comment type="catalytic activity">
    <reaction evidence="1">
        <text>4-imidazolone-5-propanoate + H2O = N-formimidoyl-L-glutamate</text>
        <dbReference type="Rhea" id="RHEA:23660"/>
        <dbReference type="ChEBI" id="CHEBI:15377"/>
        <dbReference type="ChEBI" id="CHEBI:58928"/>
        <dbReference type="ChEBI" id="CHEBI:77893"/>
        <dbReference type="EC" id="3.5.2.7"/>
    </reaction>
</comment>
<comment type="cofactor">
    <cofactor evidence="1">
        <name>Zn(2+)</name>
        <dbReference type="ChEBI" id="CHEBI:29105"/>
    </cofactor>
    <cofactor evidence="1">
        <name>Fe(3+)</name>
        <dbReference type="ChEBI" id="CHEBI:29034"/>
    </cofactor>
    <text evidence="1">Binds 1 zinc or iron ion per subunit.</text>
</comment>
<comment type="pathway">
    <text evidence="1">Amino-acid degradation; L-histidine degradation into L-glutamate; N-formimidoyl-L-glutamate from L-histidine: step 3/3.</text>
</comment>
<comment type="subcellular location">
    <subcellularLocation>
        <location evidence="1">Cytoplasm</location>
    </subcellularLocation>
</comment>
<comment type="similarity">
    <text evidence="1">Belongs to the metallo-dependent hydrolases superfamily. HutI family.</text>
</comment>
<evidence type="ECO:0000255" key="1">
    <source>
        <dbReference type="HAMAP-Rule" id="MF_00372"/>
    </source>
</evidence>
<reference key="1">
    <citation type="submission" date="2008-10" db="EMBL/GenBank/DDBJ databases">
        <title>Genome sequence of Bacillus cereus B4264.</title>
        <authorList>
            <person name="Dodson R.J."/>
            <person name="Durkin A.S."/>
            <person name="Rosovitz M.J."/>
            <person name="Rasko D.A."/>
            <person name="Hoffmaster A."/>
            <person name="Ravel J."/>
            <person name="Sutton G."/>
        </authorList>
    </citation>
    <scope>NUCLEOTIDE SEQUENCE [LARGE SCALE GENOMIC DNA]</scope>
    <source>
        <strain>B4264</strain>
    </source>
</reference>
<proteinExistence type="inferred from homology"/>
<gene>
    <name evidence="1" type="primary">hutI</name>
    <name type="ordered locus">BCB4264_A3758</name>
</gene>